<reference key="1">
    <citation type="submission" date="2009-03" db="EMBL/GenBank/DDBJ databases">
        <title>Complete genome sequence of Edwardsiella ictaluri 93-146.</title>
        <authorList>
            <person name="Williams M.L."/>
            <person name="Gillaspy A.F."/>
            <person name="Dyer D.W."/>
            <person name="Thune R.L."/>
            <person name="Waldbieser G.C."/>
            <person name="Schuster S.C."/>
            <person name="Gipson J."/>
            <person name="Zaitshik J."/>
            <person name="Landry C."/>
            <person name="Lawrence M.L."/>
        </authorList>
    </citation>
    <scope>NUCLEOTIDE SEQUENCE [LARGE SCALE GENOMIC DNA]</scope>
    <source>
        <strain>93-146</strain>
    </source>
</reference>
<organism>
    <name type="scientific">Edwardsiella ictaluri (strain 93-146)</name>
    <dbReference type="NCBI Taxonomy" id="634503"/>
    <lineage>
        <taxon>Bacteria</taxon>
        <taxon>Pseudomonadati</taxon>
        <taxon>Pseudomonadota</taxon>
        <taxon>Gammaproteobacteria</taxon>
        <taxon>Enterobacterales</taxon>
        <taxon>Hafniaceae</taxon>
        <taxon>Edwardsiella</taxon>
    </lineage>
</organism>
<name>NRFA_EDWI9</name>
<proteinExistence type="inferred from homology"/>
<dbReference type="EC" id="1.7.2.2" evidence="1"/>
<dbReference type="EMBL" id="CP001600">
    <property type="protein sequence ID" value="ACR70312.1"/>
    <property type="molecule type" value="Genomic_DNA"/>
</dbReference>
<dbReference type="RefSeq" id="WP_015872400.1">
    <property type="nucleotide sequence ID" value="NZ_CP169062.1"/>
</dbReference>
<dbReference type="SMR" id="C5BES4"/>
<dbReference type="STRING" id="67780.B6E78_07475"/>
<dbReference type="GeneID" id="69540031"/>
<dbReference type="KEGG" id="eic:NT01EI_3162"/>
<dbReference type="PATRIC" id="fig|634503.3.peg.2823"/>
<dbReference type="HOGENOM" id="CLU_035040_1_0_6"/>
<dbReference type="OrthoDB" id="9780421at2"/>
<dbReference type="UniPathway" id="UPA00653"/>
<dbReference type="Proteomes" id="UP000001485">
    <property type="component" value="Chromosome"/>
</dbReference>
<dbReference type="GO" id="GO:0030288">
    <property type="term" value="C:outer membrane-bounded periplasmic space"/>
    <property type="evidence" value="ECO:0007669"/>
    <property type="project" value="TreeGrafter"/>
</dbReference>
<dbReference type="GO" id="GO:0005509">
    <property type="term" value="F:calcium ion binding"/>
    <property type="evidence" value="ECO:0007669"/>
    <property type="project" value="UniProtKB-UniRule"/>
</dbReference>
<dbReference type="GO" id="GO:0020037">
    <property type="term" value="F:heme binding"/>
    <property type="evidence" value="ECO:0007669"/>
    <property type="project" value="InterPro"/>
</dbReference>
<dbReference type="GO" id="GO:0005506">
    <property type="term" value="F:iron ion binding"/>
    <property type="evidence" value="ECO:0007669"/>
    <property type="project" value="UniProtKB-UniRule"/>
</dbReference>
<dbReference type="GO" id="GO:0042279">
    <property type="term" value="F:nitrite reductase (cytochrome, ammonia-forming) activity"/>
    <property type="evidence" value="ECO:0007669"/>
    <property type="project" value="UniProtKB-UniRule"/>
</dbReference>
<dbReference type="GO" id="GO:0019645">
    <property type="term" value="P:anaerobic electron transport chain"/>
    <property type="evidence" value="ECO:0007669"/>
    <property type="project" value="TreeGrafter"/>
</dbReference>
<dbReference type="GO" id="GO:0042128">
    <property type="term" value="P:nitrate assimilation"/>
    <property type="evidence" value="ECO:0007669"/>
    <property type="project" value="UniProtKB-UniRule"/>
</dbReference>
<dbReference type="CDD" id="cd00548">
    <property type="entry name" value="NrfA-like"/>
    <property type="match status" value="1"/>
</dbReference>
<dbReference type="FunFam" id="1.10.1130.10:FF:000002">
    <property type="entry name" value="Cytochrome c-552"/>
    <property type="match status" value="1"/>
</dbReference>
<dbReference type="FunFam" id="1.20.140.10:FF:000014">
    <property type="entry name" value="Cytochrome c-552"/>
    <property type="match status" value="1"/>
</dbReference>
<dbReference type="Gene3D" id="1.20.140.10">
    <property type="entry name" value="Butyryl-CoA Dehydrogenase, subunit A, domain 3"/>
    <property type="match status" value="1"/>
</dbReference>
<dbReference type="Gene3D" id="1.10.1130.10">
    <property type="entry name" value="Flavocytochrome C3, Chain A"/>
    <property type="match status" value="1"/>
</dbReference>
<dbReference type="HAMAP" id="MF_01182">
    <property type="entry name" value="Cytochrom_C552"/>
    <property type="match status" value="1"/>
</dbReference>
<dbReference type="InterPro" id="IPR003321">
    <property type="entry name" value="Cyt_c552"/>
</dbReference>
<dbReference type="InterPro" id="IPR017570">
    <property type="entry name" value="Cyt_c_NO2Rdtase_formate-dep"/>
</dbReference>
<dbReference type="InterPro" id="IPR036280">
    <property type="entry name" value="Multihaem_cyt_sf"/>
</dbReference>
<dbReference type="NCBIfam" id="TIGR03152">
    <property type="entry name" value="cyto_c552_HCOOH"/>
    <property type="match status" value="1"/>
</dbReference>
<dbReference type="NCBIfam" id="NF008339">
    <property type="entry name" value="PRK11125.1"/>
    <property type="match status" value="1"/>
</dbReference>
<dbReference type="PANTHER" id="PTHR30633:SF0">
    <property type="entry name" value="CYTOCHROME C-552"/>
    <property type="match status" value="1"/>
</dbReference>
<dbReference type="PANTHER" id="PTHR30633">
    <property type="entry name" value="CYTOCHROME C-552 RESPIRATORY NITRITE REDUCTASE"/>
    <property type="match status" value="1"/>
</dbReference>
<dbReference type="Pfam" id="PF02335">
    <property type="entry name" value="Cytochrom_C552"/>
    <property type="match status" value="1"/>
</dbReference>
<dbReference type="PIRSF" id="PIRSF000243">
    <property type="entry name" value="Cyt_c552"/>
    <property type="match status" value="1"/>
</dbReference>
<dbReference type="SUPFAM" id="SSF48695">
    <property type="entry name" value="Multiheme cytochromes"/>
    <property type="match status" value="1"/>
</dbReference>
<dbReference type="PROSITE" id="PS51008">
    <property type="entry name" value="MULTIHEME_CYTC"/>
    <property type="match status" value="1"/>
</dbReference>
<gene>
    <name evidence="1" type="primary">nrfA</name>
    <name type="ordered locus">NT01EI_3162</name>
</gene>
<protein>
    <recommendedName>
        <fullName evidence="1">Cytochrome c-552</fullName>
        <ecNumber evidence="1">1.7.2.2</ecNumber>
    </recommendedName>
    <alternativeName>
        <fullName evidence="1">Ammonia-forming cytochrome c nitrite reductase</fullName>
        <shortName evidence="1">Cytochrome c nitrite reductase</shortName>
    </alternativeName>
</protein>
<accession>C5BES4</accession>
<keyword id="KW-0106">Calcium</keyword>
<keyword id="KW-0249">Electron transport</keyword>
<keyword id="KW-0349">Heme</keyword>
<keyword id="KW-0408">Iron</keyword>
<keyword id="KW-0479">Metal-binding</keyword>
<keyword id="KW-0560">Oxidoreductase</keyword>
<keyword id="KW-0574">Periplasm</keyword>
<keyword id="KW-0732">Signal</keyword>
<keyword id="KW-0813">Transport</keyword>
<sequence>MIKVSNALQRILIGAALALFGGGAQAAAADSAAAAEKAPPKIEARNDRFAAPHPDQYASWKATAEQSEISDALAEDPRLVILWAGYAFAKDYNKPRGHAYALTDVRETLRTGAPMKPEDGPQPMACWSCKSPDVARVIAEQGEAAYFHGMWARGGPEIVNALGCADCHNTASDDFAAGKPALQLSRPYAARALEAIGKPFDKANRIDQQSMVCGQCHVEYYFSGKDKTVKFPWDQGTSVDEIEAYYDGIAFTDWVNPLSKAPMLKAQHPDYETWRAGIHGQNNISCVDCHMPKVQNAEGKLYTSHKIGNPFDSFEQTCRTCHTQDKATLQQTVAKRKQDVNEIKLKVEDQLVRAHFEAKAAWAAGASEAEMQPILTDIRHAQWRWDFSIASHGVHMHAPDVALRMLGTALDKAANARTQLVRVLANHGVNDAVPLPDISTKALAQQALGMNMQQFTQEKQTFLNTVVPEWEAQARSAGRLDH</sequence>
<comment type="function">
    <text evidence="1">Catalyzes the reduction of nitrite to ammonia, consuming six electrons in the process.</text>
</comment>
<comment type="catalytic activity">
    <reaction evidence="1">
        <text>6 Fe(III)-[cytochrome c] + NH4(+) + 2 H2O = 6 Fe(II)-[cytochrome c] + nitrite + 8 H(+)</text>
        <dbReference type="Rhea" id="RHEA:13089"/>
        <dbReference type="Rhea" id="RHEA-COMP:10350"/>
        <dbReference type="Rhea" id="RHEA-COMP:14399"/>
        <dbReference type="ChEBI" id="CHEBI:15377"/>
        <dbReference type="ChEBI" id="CHEBI:15378"/>
        <dbReference type="ChEBI" id="CHEBI:16301"/>
        <dbReference type="ChEBI" id="CHEBI:28938"/>
        <dbReference type="ChEBI" id="CHEBI:29033"/>
        <dbReference type="ChEBI" id="CHEBI:29034"/>
        <dbReference type="EC" id="1.7.2.2"/>
    </reaction>
</comment>
<comment type="cofactor">
    <cofactor evidence="1">
        <name>Ca(2+)</name>
        <dbReference type="ChEBI" id="CHEBI:29108"/>
    </cofactor>
    <text evidence="1">Binds 1 Ca(2+) ion per monomer.</text>
</comment>
<comment type="cofactor">
    <cofactor evidence="1">
        <name>heme c</name>
        <dbReference type="ChEBI" id="CHEBI:61717"/>
    </cofactor>
    <text evidence="1">Binds 5 heme c groups covalently per monomer.</text>
</comment>
<comment type="pathway">
    <text evidence="1">Nitrogen metabolism; nitrate reduction (assimilation).</text>
</comment>
<comment type="subcellular location">
    <subcellularLocation>
        <location evidence="1">Periplasm</location>
    </subcellularLocation>
</comment>
<comment type="similarity">
    <text evidence="1">Belongs to the cytochrome c-552 family.</text>
</comment>
<evidence type="ECO:0000255" key="1">
    <source>
        <dbReference type="HAMAP-Rule" id="MF_01182"/>
    </source>
</evidence>
<feature type="signal peptide" evidence="1">
    <location>
        <begin position="1"/>
        <end position="26"/>
    </location>
</feature>
<feature type="chain" id="PRO_1000213762" description="Cytochrome c-552">
    <location>
        <begin position="27"/>
        <end position="482"/>
    </location>
</feature>
<feature type="binding site" description="axial binding residue" evidence="1">
    <location>
        <position position="98"/>
    </location>
    <ligand>
        <name>heme c</name>
        <dbReference type="ChEBI" id="CHEBI:61717"/>
        <label>3</label>
    </ligand>
    <ligandPart>
        <name>Fe</name>
        <dbReference type="ChEBI" id="CHEBI:18248"/>
    </ligandPart>
</feature>
<feature type="binding site" description="covalent" evidence="1">
    <location>
        <position position="126"/>
    </location>
    <ligand>
        <name>heme</name>
        <dbReference type="ChEBI" id="CHEBI:30413"/>
        <label>1</label>
    </ligand>
</feature>
<feature type="binding site" description="covalent" evidence="1">
    <location>
        <position position="129"/>
    </location>
    <ligand>
        <name>heme</name>
        <dbReference type="ChEBI" id="CHEBI:30413"/>
        <label>1</label>
    </ligand>
</feature>
<feature type="binding site" description="axial binding residue" evidence="1">
    <location>
        <position position="130"/>
    </location>
    <ligand>
        <name>heme</name>
        <dbReference type="ChEBI" id="CHEBI:30413"/>
        <label>1</label>
    </ligand>
    <ligandPart>
        <name>Fe</name>
        <dbReference type="ChEBI" id="CHEBI:18248"/>
    </ligandPart>
</feature>
<feature type="binding site" description="covalent" evidence="1">
    <location>
        <position position="164"/>
    </location>
    <ligand>
        <name>heme c</name>
        <dbReference type="ChEBI" id="CHEBI:61717"/>
        <label>2</label>
    </ligand>
</feature>
<feature type="binding site" description="covalent" evidence="1">
    <location>
        <position position="167"/>
    </location>
    <ligand>
        <name>heme c</name>
        <dbReference type="ChEBI" id="CHEBI:61717"/>
        <label>2</label>
    </ligand>
</feature>
<feature type="binding site" description="axial binding residue" evidence="1">
    <location>
        <position position="168"/>
    </location>
    <ligand>
        <name>heme c</name>
        <dbReference type="ChEBI" id="CHEBI:61717"/>
        <label>2</label>
    </ligand>
    <ligandPart>
        <name>Fe</name>
        <dbReference type="ChEBI" id="CHEBI:18248"/>
    </ligandPart>
</feature>
<feature type="binding site" description="covalent" evidence="1">
    <location>
        <position position="213"/>
    </location>
    <ligand>
        <name>heme c</name>
        <dbReference type="ChEBI" id="CHEBI:61717"/>
        <label>3</label>
    </ligand>
</feature>
<feature type="binding site" description="covalent" evidence="1">
    <location>
        <position position="216"/>
    </location>
    <ligand>
        <name>heme c</name>
        <dbReference type="ChEBI" id="CHEBI:61717"/>
        <label>3</label>
    </ligand>
</feature>
<feature type="binding site" description="axial binding residue" evidence="1">
    <location>
        <position position="217"/>
    </location>
    <ligand>
        <name>heme c</name>
        <dbReference type="ChEBI" id="CHEBI:61717"/>
        <label>3</label>
    </ligand>
    <ligandPart>
        <name>Fe</name>
        <dbReference type="ChEBI" id="CHEBI:18248"/>
    </ligandPart>
</feature>
<feature type="binding site" evidence="1">
    <location>
        <position position="219"/>
    </location>
    <ligand>
        <name>Ca(2+)</name>
        <dbReference type="ChEBI" id="CHEBI:29108"/>
    </ligand>
</feature>
<feature type="binding site" evidence="1">
    <location>
        <position position="220"/>
    </location>
    <ligand>
        <name>Ca(2+)</name>
        <dbReference type="ChEBI" id="CHEBI:29108"/>
    </ligand>
</feature>
<feature type="binding site" evidence="1">
    <location>
        <position position="220"/>
    </location>
    <ligand>
        <name>substrate</name>
    </ligand>
</feature>
<feature type="binding site" evidence="1">
    <location>
        <position position="265"/>
    </location>
    <ligand>
        <name>Ca(2+)</name>
        <dbReference type="ChEBI" id="CHEBI:29108"/>
    </ligand>
</feature>
<feature type="binding site" evidence="1">
    <location>
        <position position="267"/>
    </location>
    <ligand>
        <name>Ca(2+)</name>
        <dbReference type="ChEBI" id="CHEBI:29108"/>
    </ligand>
</feature>
<feature type="binding site" evidence="1">
    <location>
        <position position="268"/>
    </location>
    <ligand>
        <name>substrate</name>
    </ligand>
</feature>
<feature type="binding site" description="axial binding residue" evidence="1">
    <location>
        <position position="279"/>
    </location>
    <ligand>
        <name>heme c</name>
        <dbReference type="ChEBI" id="CHEBI:61717"/>
        <label>5</label>
    </ligand>
    <ligandPart>
        <name>Fe</name>
        <dbReference type="ChEBI" id="CHEBI:18248"/>
    </ligandPart>
</feature>
<feature type="binding site" description="covalent" evidence="1">
    <location>
        <position position="286"/>
    </location>
    <ligand>
        <name>heme c</name>
        <dbReference type="ChEBI" id="CHEBI:61717"/>
        <label>4</label>
    </ligand>
</feature>
<feature type="binding site" description="covalent" evidence="1">
    <location>
        <position position="289"/>
    </location>
    <ligand>
        <name>heme c</name>
        <dbReference type="ChEBI" id="CHEBI:61717"/>
        <label>4</label>
    </ligand>
</feature>
<feature type="binding site" description="axial binding residue" evidence="1">
    <location>
        <position position="290"/>
    </location>
    <ligand>
        <name>heme c</name>
        <dbReference type="ChEBI" id="CHEBI:61717"/>
        <label>4</label>
    </ligand>
    <ligandPart>
        <name>Fe</name>
        <dbReference type="ChEBI" id="CHEBI:18248"/>
    </ligandPart>
</feature>
<feature type="binding site" description="axial binding residue" evidence="1">
    <location>
        <position position="305"/>
    </location>
    <ligand>
        <name>heme c</name>
        <dbReference type="ChEBI" id="CHEBI:61717"/>
        <label>2</label>
    </ligand>
    <ligandPart>
        <name>Fe</name>
        <dbReference type="ChEBI" id="CHEBI:18248"/>
    </ligandPart>
</feature>
<feature type="binding site" description="covalent" evidence="1">
    <location>
        <position position="318"/>
    </location>
    <ligand>
        <name>heme c</name>
        <dbReference type="ChEBI" id="CHEBI:61717"/>
        <label>5</label>
    </ligand>
</feature>
<feature type="binding site" description="covalent" evidence="1">
    <location>
        <position position="321"/>
    </location>
    <ligand>
        <name>heme c</name>
        <dbReference type="ChEBI" id="CHEBI:61717"/>
        <label>5</label>
    </ligand>
</feature>
<feature type="binding site" description="axial binding residue" evidence="1">
    <location>
        <position position="322"/>
    </location>
    <ligand>
        <name>heme c</name>
        <dbReference type="ChEBI" id="CHEBI:61717"/>
        <label>5</label>
    </ligand>
    <ligandPart>
        <name>Fe</name>
        <dbReference type="ChEBI" id="CHEBI:18248"/>
    </ligandPart>
</feature>
<feature type="binding site" description="axial binding residue" evidence="1">
    <location>
        <position position="397"/>
    </location>
    <ligand>
        <name>heme c</name>
        <dbReference type="ChEBI" id="CHEBI:61717"/>
        <label>4</label>
    </ligand>
    <ligandPart>
        <name>Fe</name>
        <dbReference type="ChEBI" id="CHEBI:18248"/>
    </ligandPart>
</feature>